<comment type="function">
    <text evidence="1">Nucleoside triphosphate pyrophosphatase that hydrolyzes dTTP and UTP. May have a dual role in cell division arrest and in preventing the incorporation of modified nucleotides into cellular nucleic acids.</text>
</comment>
<comment type="catalytic activity">
    <reaction evidence="1">
        <text>dTTP + H2O = dTMP + diphosphate + H(+)</text>
        <dbReference type="Rhea" id="RHEA:28534"/>
        <dbReference type="ChEBI" id="CHEBI:15377"/>
        <dbReference type="ChEBI" id="CHEBI:15378"/>
        <dbReference type="ChEBI" id="CHEBI:33019"/>
        <dbReference type="ChEBI" id="CHEBI:37568"/>
        <dbReference type="ChEBI" id="CHEBI:63528"/>
        <dbReference type="EC" id="3.6.1.9"/>
    </reaction>
</comment>
<comment type="catalytic activity">
    <reaction evidence="1">
        <text>UTP + H2O = UMP + diphosphate + H(+)</text>
        <dbReference type="Rhea" id="RHEA:29395"/>
        <dbReference type="ChEBI" id="CHEBI:15377"/>
        <dbReference type="ChEBI" id="CHEBI:15378"/>
        <dbReference type="ChEBI" id="CHEBI:33019"/>
        <dbReference type="ChEBI" id="CHEBI:46398"/>
        <dbReference type="ChEBI" id="CHEBI:57865"/>
        <dbReference type="EC" id="3.6.1.9"/>
    </reaction>
</comment>
<comment type="cofactor">
    <cofactor evidence="1">
        <name>a divalent metal cation</name>
        <dbReference type="ChEBI" id="CHEBI:60240"/>
    </cofactor>
</comment>
<comment type="subcellular location">
    <subcellularLocation>
        <location evidence="1">Cytoplasm</location>
    </subcellularLocation>
</comment>
<comment type="similarity">
    <text evidence="1">Belongs to the Maf family. YhdE subfamily.</text>
</comment>
<name>NTPPA_BURO1</name>
<keyword id="KW-0963">Cytoplasm</keyword>
<keyword id="KW-0378">Hydrolase</keyword>
<keyword id="KW-0546">Nucleotide metabolism</keyword>
<accession>Q1BUW3</accession>
<evidence type="ECO:0000255" key="1">
    <source>
        <dbReference type="HAMAP-Rule" id="MF_00528"/>
    </source>
</evidence>
<dbReference type="EC" id="3.6.1.9" evidence="1"/>
<dbReference type="EMBL" id="CP000378">
    <property type="protein sequence ID" value="ABF76592.1"/>
    <property type="molecule type" value="Genomic_DNA"/>
</dbReference>
<dbReference type="SMR" id="Q1BUW3"/>
<dbReference type="HOGENOM" id="CLU_040416_2_1_4"/>
<dbReference type="GO" id="GO:0005737">
    <property type="term" value="C:cytoplasm"/>
    <property type="evidence" value="ECO:0007669"/>
    <property type="project" value="UniProtKB-SubCell"/>
</dbReference>
<dbReference type="GO" id="GO:0036218">
    <property type="term" value="F:dTTP diphosphatase activity"/>
    <property type="evidence" value="ECO:0007669"/>
    <property type="project" value="RHEA"/>
</dbReference>
<dbReference type="GO" id="GO:0036221">
    <property type="term" value="F:UTP diphosphatase activity"/>
    <property type="evidence" value="ECO:0007669"/>
    <property type="project" value="RHEA"/>
</dbReference>
<dbReference type="GO" id="GO:0009117">
    <property type="term" value="P:nucleotide metabolic process"/>
    <property type="evidence" value="ECO:0007669"/>
    <property type="project" value="UniProtKB-KW"/>
</dbReference>
<dbReference type="CDD" id="cd00555">
    <property type="entry name" value="Maf"/>
    <property type="match status" value="1"/>
</dbReference>
<dbReference type="Gene3D" id="3.90.950.10">
    <property type="match status" value="1"/>
</dbReference>
<dbReference type="HAMAP" id="MF_00528">
    <property type="entry name" value="Maf"/>
    <property type="match status" value="1"/>
</dbReference>
<dbReference type="InterPro" id="IPR029001">
    <property type="entry name" value="ITPase-like_fam"/>
</dbReference>
<dbReference type="InterPro" id="IPR003697">
    <property type="entry name" value="Maf-like"/>
</dbReference>
<dbReference type="NCBIfam" id="TIGR00172">
    <property type="entry name" value="maf"/>
    <property type="match status" value="1"/>
</dbReference>
<dbReference type="PANTHER" id="PTHR43213">
    <property type="entry name" value="BIFUNCTIONAL DTTP/UTP PYROPHOSPHATASE/METHYLTRANSFERASE PROTEIN-RELATED"/>
    <property type="match status" value="1"/>
</dbReference>
<dbReference type="PANTHER" id="PTHR43213:SF5">
    <property type="entry name" value="BIFUNCTIONAL DTTP_UTP PYROPHOSPHATASE_METHYLTRANSFERASE PROTEIN-RELATED"/>
    <property type="match status" value="1"/>
</dbReference>
<dbReference type="Pfam" id="PF02545">
    <property type="entry name" value="Maf"/>
    <property type="match status" value="1"/>
</dbReference>
<dbReference type="PIRSF" id="PIRSF006305">
    <property type="entry name" value="Maf"/>
    <property type="match status" value="1"/>
</dbReference>
<dbReference type="SUPFAM" id="SSF52972">
    <property type="entry name" value="ITPase-like"/>
    <property type="match status" value="1"/>
</dbReference>
<organism>
    <name type="scientific">Burkholderia orbicola (strain AU 1054)</name>
    <dbReference type="NCBI Taxonomy" id="331271"/>
    <lineage>
        <taxon>Bacteria</taxon>
        <taxon>Pseudomonadati</taxon>
        <taxon>Pseudomonadota</taxon>
        <taxon>Betaproteobacteria</taxon>
        <taxon>Burkholderiales</taxon>
        <taxon>Burkholderiaceae</taxon>
        <taxon>Burkholderia</taxon>
        <taxon>Burkholderia cepacia complex</taxon>
        <taxon>Burkholderia orbicola</taxon>
    </lineage>
</organism>
<reference key="1">
    <citation type="submission" date="2006-05" db="EMBL/GenBank/DDBJ databases">
        <title>Complete sequence of chromosome 1 of Burkholderia cenocepacia AU 1054.</title>
        <authorList>
            <consortium name="US DOE Joint Genome Institute"/>
            <person name="Copeland A."/>
            <person name="Lucas S."/>
            <person name="Lapidus A."/>
            <person name="Barry K."/>
            <person name="Detter J.C."/>
            <person name="Glavina del Rio T."/>
            <person name="Hammon N."/>
            <person name="Israni S."/>
            <person name="Dalin E."/>
            <person name="Tice H."/>
            <person name="Pitluck S."/>
            <person name="Chain P."/>
            <person name="Malfatti S."/>
            <person name="Shin M."/>
            <person name="Vergez L."/>
            <person name="Schmutz J."/>
            <person name="Larimer F."/>
            <person name="Land M."/>
            <person name="Hauser L."/>
            <person name="Kyrpides N."/>
            <person name="Lykidis A."/>
            <person name="LiPuma J.J."/>
            <person name="Konstantinidis K."/>
            <person name="Tiedje J.M."/>
            <person name="Richardson P."/>
        </authorList>
    </citation>
    <scope>NUCLEOTIDE SEQUENCE [LARGE SCALE GENOMIC DNA]</scope>
    <source>
        <strain>AU 1054</strain>
    </source>
</reference>
<protein>
    <recommendedName>
        <fullName evidence="1">dTTP/UTP pyrophosphatase</fullName>
        <shortName evidence="1">dTTPase/UTPase</shortName>
        <ecNumber evidence="1">3.6.1.9</ecNumber>
    </recommendedName>
    <alternativeName>
        <fullName evidence="1">Nucleoside triphosphate pyrophosphatase</fullName>
    </alternativeName>
    <alternativeName>
        <fullName evidence="1">Nucleotide pyrophosphatase</fullName>
        <shortName evidence="1">Nucleotide PPase</shortName>
    </alternativeName>
</protein>
<gene>
    <name type="ordered locus">Bcen_1688</name>
</gene>
<feature type="chain" id="PRO_0000267264" description="dTTP/UTP pyrophosphatase">
    <location>
        <begin position="1"/>
        <end position="210"/>
    </location>
</feature>
<feature type="active site" description="Proton acceptor" evidence="1">
    <location>
        <position position="89"/>
    </location>
</feature>
<feature type="site" description="Important for substrate specificity" evidence="1">
    <location>
        <position position="21"/>
    </location>
</feature>
<feature type="site" description="Important for substrate specificity" evidence="1">
    <location>
        <position position="90"/>
    </location>
</feature>
<feature type="site" description="Important for substrate specificity" evidence="1">
    <location>
        <position position="174"/>
    </location>
</feature>
<proteinExistence type="inferred from homology"/>
<sequence>MPSSTSPALFPILYLASQSPRRQELLLQIGVRFELLLPRPDEDAEALEAELPGEAADAYVRRVTVAKAEAARARLVASGKPAAPVLVADTTVTIDGAILGKPADADDALAMLTRLAGREHEVLTAVAVIGADGELLPPALSRSSVRFSNAQRDAYVRYVETGEPFGKAGAYAIQGRAAEFIERIDGSHSGIMGLPLFETAALLRTARVAF</sequence>